<organism>
    <name type="scientific">Ruthia magnifica subsp. Calyptogena magnifica</name>
    <dbReference type="NCBI Taxonomy" id="413404"/>
    <lineage>
        <taxon>Bacteria</taxon>
        <taxon>Pseudomonadati</taxon>
        <taxon>Pseudomonadota</taxon>
        <taxon>Gammaproteobacteria</taxon>
        <taxon>Candidatus Pseudothioglobaceae</taxon>
        <taxon>Candidatus Ruthturnera</taxon>
    </lineage>
</organism>
<protein>
    <recommendedName>
        <fullName evidence="1">Succinate--CoA ligase [ADP-forming] subunit beta</fullName>
        <ecNumber evidence="1">6.2.1.5</ecNumber>
    </recommendedName>
    <alternativeName>
        <fullName evidence="1">Succinyl-CoA synthetase subunit beta</fullName>
        <shortName evidence="1">SCS-beta</shortName>
    </alternativeName>
</protein>
<comment type="function">
    <text evidence="1">Succinyl-CoA synthetase functions in the citric acid cycle (TCA), coupling the hydrolysis of succinyl-CoA to the synthesis of either ATP or GTP and thus represents the only step of substrate-level phosphorylation in the TCA. The beta subunit provides nucleotide specificity of the enzyme and binds the substrate succinate, while the binding sites for coenzyme A and phosphate are found in the alpha subunit.</text>
</comment>
<comment type="catalytic activity">
    <reaction evidence="1">
        <text>succinate + ATP + CoA = succinyl-CoA + ADP + phosphate</text>
        <dbReference type="Rhea" id="RHEA:17661"/>
        <dbReference type="ChEBI" id="CHEBI:30031"/>
        <dbReference type="ChEBI" id="CHEBI:30616"/>
        <dbReference type="ChEBI" id="CHEBI:43474"/>
        <dbReference type="ChEBI" id="CHEBI:57287"/>
        <dbReference type="ChEBI" id="CHEBI:57292"/>
        <dbReference type="ChEBI" id="CHEBI:456216"/>
        <dbReference type="EC" id="6.2.1.5"/>
    </reaction>
    <physiologicalReaction direction="right-to-left" evidence="1">
        <dbReference type="Rhea" id="RHEA:17663"/>
    </physiologicalReaction>
</comment>
<comment type="catalytic activity">
    <reaction evidence="1">
        <text>GTP + succinate + CoA = succinyl-CoA + GDP + phosphate</text>
        <dbReference type="Rhea" id="RHEA:22120"/>
        <dbReference type="ChEBI" id="CHEBI:30031"/>
        <dbReference type="ChEBI" id="CHEBI:37565"/>
        <dbReference type="ChEBI" id="CHEBI:43474"/>
        <dbReference type="ChEBI" id="CHEBI:57287"/>
        <dbReference type="ChEBI" id="CHEBI:57292"/>
        <dbReference type="ChEBI" id="CHEBI:58189"/>
    </reaction>
    <physiologicalReaction direction="right-to-left" evidence="1">
        <dbReference type="Rhea" id="RHEA:22122"/>
    </physiologicalReaction>
</comment>
<comment type="cofactor">
    <cofactor evidence="1">
        <name>Mg(2+)</name>
        <dbReference type="ChEBI" id="CHEBI:18420"/>
    </cofactor>
    <text evidence="1">Binds 1 Mg(2+) ion per subunit.</text>
</comment>
<comment type="pathway">
    <text evidence="1">Carbohydrate metabolism; tricarboxylic acid cycle; succinate from succinyl-CoA (ligase route): step 1/1.</text>
</comment>
<comment type="subunit">
    <text evidence="1">Heterotetramer of two alpha and two beta subunits.</text>
</comment>
<comment type="similarity">
    <text evidence="1">Belongs to the succinate/malate CoA ligase beta subunit family.</text>
</comment>
<accession>A1AVI3</accession>
<keyword id="KW-0067">ATP-binding</keyword>
<keyword id="KW-0436">Ligase</keyword>
<keyword id="KW-0460">Magnesium</keyword>
<keyword id="KW-0479">Metal-binding</keyword>
<keyword id="KW-0547">Nucleotide-binding</keyword>
<keyword id="KW-0816">Tricarboxylic acid cycle</keyword>
<evidence type="ECO:0000255" key="1">
    <source>
        <dbReference type="HAMAP-Rule" id="MF_00558"/>
    </source>
</evidence>
<gene>
    <name evidence="1" type="primary">sucC</name>
    <name type="ordered locus">Rmag_0146</name>
</gene>
<proteinExistence type="inferred from homology"/>
<name>SUCC_RUTMC</name>
<dbReference type="EC" id="6.2.1.5" evidence="1"/>
<dbReference type="EMBL" id="CP000488">
    <property type="protein sequence ID" value="ABL01940.1"/>
    <property type="molecule type" value="Genomic_DNA"/>
</dbReference>
<dbReference type="RefSeq" id="WP_011737566.1">
    <property type="nucleotide sequence ID" value="NC_008610.1"/>
</dbReference>
<dbReference type="SMR" id="A1AVI3"/>
<dbReference type="STRING" id="413404.Rmag_0146"/>
<dbReference type="KEGG" id="rma:Rmag_0146"/>
<dbReference type="eggNOG" id="COG0045">
    <property type="taxonomic scope" value="Bacteria"/>
</dbReference>
<dbReference type="HOGENOM" id="CLU_037430_0_2_6"/>
<dbReference type="OrthoDB" id="9802602at2"/>
<dbReference type="UniPathway" id="UPA00223">
    <property type="reaction ID" value="UER00999"/>
</dbReference>
<dbReference type="Proteomes" id="UP000002587">
    <property type="component" value="Chromosome"/>
</dbReference>
<dbReference type="GO" id="GO:0005829">
    <property type="term" value="C:cytosol"/>
    <property type="evidence" value="ECO:0007669"/>
    <property type="project" value="TreeGrafter"/>
</dbReference>
<dbReference type="GO" id="GO:0042709">
    <property type="term" value="C:succinate-CoA ligase complex"/>
    <property type="evidence" value="ECO:0007669"/>
    <property type="project" value="TreeGrafter"/>
</dbReference>
<dbReference type="GO" id="GO:0005524">
    <property type="term" value="F:ATP binding"/>
    <property type="evidence" value="ECO:0007669"/>
    <property type="project" value="UniProtKB-UniRule"/>
</dbReference>
<dbReference type="GO" id="GO:0000287">
    <property type="term" value="F:magnesium ion binding"/>
    <property type="evidence" value="ECO:0007669"/>
    <property type="project" value="UniProtKB-UniRule"/>
</dbReference>
<dbReference type="GO" id="GO:0004775">
    <property type="term" value="F:succinate-CoA ligase (ADP-forming) activity"/>
    <property type="evidence" value="ECO:0007669"/>
    <property type="project" value="UniProtKB-UniRule"/>
</dbReference>
<dbReference type="GO" id="GO:0004776">
    <property type="term" value="F:succinate-CoA ligase (GDP-forming) activity"/>
    <property type="evidence" value="ECO:0007669"/>
    <property type="project" value="RHEA"/>
</dbReference>
<dbReference type="GO" id="GO:0006104">
    <property type="term" value="P:succinyl-CoA metabolic process"/>
    <property type="evidence" value="ECO:0007669"/>
    <property type="project" value="TreeGrafter"/>
</dbReference>
<dbReference type="GO" id="GO:0006099">
    <property type="term" value="P:tricarboxylic acid cycle"/>
    <property type="evidence" value="ECO:0007669"/>
    <property type="project" value="UniProtKB-UniRule"/>
</dbReference>
<dbReference type="FunFam" id="3.30.1490.20:FF:000002">
    <property type="entry name" value="Succinate--CoA ligase [ADP-forming] subunit beta"/>
    <property type="match status" value="1"/>
</dbReference>
<dbReference type="FunFam" id="3.30.470.20:FF:000002">
    <property type="entry name" value="Succinate--CoA ligase [ADP-forming] subunit beta"/>
    <property type="match status" value="1"/>
</dbReference>
<dbReference type="FunFam" id="3.40.50.261:FF:000001">
    <property type="entry name" value="Succinate--CoA ligase [ADP-forming] subunit beta"/>
    <property type="match status" value="1"/>
</dbReference>
<dbReference type="Gene3D" id="3.30.1490.20">
    <property type="entry name" value="ATP-grasp fold, A domain"/>
    <property type="match status" value="1"/>
</dbReference>
<dbReference type="Gene3D" id="3.30.470.20">
    <property type="entry name" value="ATP-grasp fold, B domain"/>
    <property type="match status" value="1"/>
</dbReference>
<dbReference type="Gene3D" id="3.40.50.261">
    <property type="entry name" value="Succinyl-CoA synthetase domains"/>
    <property type="match status" value="1"/>
</dbReference>
<dbReference type="HAMAP" id="MF_00558">
    <property type="entry name" value="Succ_CoA_beta"/>
    <property type="match status" value="1"/>
</dbReference>
<dbReference type="InterPro" id="IPR013650">
    <property type="entry name" value="ATP-grasp_succ-CoA_synth-type"/>
</dbReference>
<dbReference type="InterPro" id="IPR013815">
    <property type="entry name" value="ATP_grasp_subdomain_1"/>
</dbReference>
<dbReference type="InterPro" id="IPR017866">
    <property type="entry name" value="Succ-CoA_synthase_bsu_CS"/>
</dbReference>
<dbReference type="InterPro" id="IPR005811">
    <property type="entry name" value="SUCC_ACL_C"/>
</dbReference>
<dbReference type="InterPro" id="IPR005809">
    <property type="entry name" value="Succ_CoA_ligase-like_bsu"/>
</dbReference>
<dbReference type="InterPro" id="IPR016102">
    <property type="entry name" value="Succinyl-CoA_synth-like"/>
</dbReference>
<dbReference type="NCBIfam" id="NF001913">
    <property type="entry name" value="PRK00696.1"/>
    <property type="match status" value="1"/>
</dbReference>
<dbReference type="NCBIfam" id="TIGR01016">
    <property type="entry name" value="sucCoAbeta"/>
    <property type="match status" value="1"/>
</dbReference>
<dbReference type="PANTHER" id="PTHR11815:SF10">
    <property type="entry name" value="SUCCINATE--COA LIGASE [GDP-FORMING] SUBUNIT BETA, MITOCHONDRIAL"/>
    <property type="match status" value="1"/>
</dbReference>
<dbReference type="PANTHER" id="PTHR11815">
    <property type="entry name" value="SUCCINYL-COA SYNTHETASE BETA CHAIN"/>
    <property type="match status" value="1"/>
</dbReference>
<dbReference type="Pfam" id="PF08442">
    <property type="entry name" value="ATP-grasp_2"/>
    <property type="match status" value="1"/>
</dbReference>
<dbReference type="Pfam" id="PF00549">
    <property type="entry name" value="Ligase_CoA"/>
    <property type="match status" value="1"/>
</dbReference>
<dbReference type="PIRSF" id="PIRSF001554">
    <property type="entry name" value="SucCS_beta"/>
    <property type="match status" value="1"/>
</dbReference>
<dbReference type="SUPFAM" id="SSF56059">
    <property type="entry name" value="Glutathione synthetase ATP-binding domain-like"/>
    <property type="match status" value="1"/>
</dbReference>
<dbReference type="SUPFAM" id="SSF52210">
    <property type="entry name" value="Succinyl-CoA synthetase domains"/>
    <property type="match status" value="1"/>
</dbReference>
<dbReference type="PROSITE" id="PS01217">
    <property type="entry name" value="SUCCINYL_COA_LIG_3"/>
    <property type="match status" value="1"/>
</dbReference>
<reference key="1">
    <citation type="journal article" date="2007" name="Science">
        <title>The Calyptogena magnifica chemoautotrophic symbiont genome.</title>
        <authorList>
            <person name="Newton I.L.G."/>
            <person name="Woyke T."/>
            <person name="Auchtung T.A."/>
            <person name="Dilly G.F."/>
            <person name="Dutton R.J."/>
            <person name="Fisher M.C."/>
            <person name="Fontanez K.M."/>
            <person name="Lau E."/>
            <person name="Stewart F.J."/>
            <person name="Richardson P.M."/>
            <person name="Barry K.W."/>
            <person name="Saunders E."/>
            <person name="Detter J.C."/>
            <person name="Wu D."/>
            <person name="Eisen J.A."/>
            <person name="Cavanaugh C.M."/>
        </authorList>
    </citation>
    <scope>NUCLEOTIDE SEQUENCE [LARGE SCALE GENOMIC DNA]</scope>
</reference>
<sequence length="386" mass="42401">MHIHEYQAKTLFRCRDIQIPKGILIDNTTKINDVCKALGGDVWVVKAQIHAGGRGKGGGVIFCHSIEKVERVCNQLLGSKLITPQTDAKGLPVGQLLIEAKQNIERELYLSLLIDRQTHKITVLSSTKGGMDIEKVASKTPDKIIKFGIDPLGSLSVQDCTFLAKKLGFNTELTKQFNNTLLSLYEIFTQKDVNLIEINPLIITQENKLLALDGKIDFDDNALYRHKDIAKLRDISQEDEKERLASEYQLNYILFDGNIGCMVNGAGLAMATMDLIEHFGGSPANFLDVGGGTTADRVAKAFELIQTETNVKSILVNIFGGIVHCDLIAQGILQAIKTVGLTLPIVVRLEGTNAPEGLNLLNKSKFNIHVESDLTKAAIKIVKLTK</sequence>
<feature type="chain" id="PRO_1000082208" description="Succinate--CoA ligase [ADP-forming] subunit beta">
    <location>
        <begin position="1"/>
        <end position="386"/>
    </location>
</feature>
<feature type="binding site" evidence="1">
    <location>
        <position position="46"/>
    </location>
    <ligand>
        <name>ATP</name>
        <dbReference type="ChEBI" id="CHEBI:30616"/>
    </ligand>
</feature>
<feature type="binding site" evidence="1">
    <location>
        <begin position="53"/>
        <end position="55"/>
    </location>
    <ligand>
        <name>ATP</name>
        <dbReference type="ChEBI" id="CHEBI:30616"/>
    </ligand>
</feature>
<feature type="binding site" evidence="1">
    <location>
        <position position="99"/>
    </location>
    <ligand>
        <name>ATP</name>
        <dbReference type="ChEBI" id="CHEBI:30616"/>
    </ligand>
</feature>
<feature type="binding site" evidence="1">
    <location>
        <position position="102"/>
    </location>
    <ligand>
        <name>ATP</name>
        <dbReference type="ChEBI" id="CHEBI:30616"/>
    </ligand>
</feature>
<feature type="binding site" evidence="1">
    <location>
        <position position="107"/>
    </location>
    <ligand>
        <name>ATP</name>
        <dbReference type="ChEBI" id="CHEBI:30616"/>
    </ligand>
</feature>
<feature type="binding site" evidence="1">
    <location>
        <position position="199"/>
    </location>
    <ligand>
        <name>Mg(2+)</name>
        <dbReference type="ChEBI" id="CHEBI:18420"/>
    </ligand>
</feature>
<feature type="binding site" evidence="1">
    <location>
        <position position="213"/>
    </location>
    <ligand>
        <name>Mg(2+)</name>
        <dbReference type="ChEBI" id="CHEBI:18420"/>
    </ligand>
</feature>
<feature type="binding site" evidence="1">
    <location>
        <position position="264"/>
    </location>
    <ligand>
        <name>substrate</name>
        <note>ligand shared with subunit alpha</note>
    </ligand>
</feature>
<feature type="binding site" evidence="1">
    <location>
        <begin position="321"/>
        <end position="323"/>
    </location>
    <ligand>
        <name>substrate</name>
        <note>ligand shared with subunit alpha</note>
    </ligand>
</feature>